<evidence type="ECO:0000255" key="1"/>
<evidence type="ECO:0000269" key="2">
    <source>
    </source>
</evidence>
<evidence type="ECO:0000303" key="3">
    <source>
    </source>
</evidence>
<evidence type="ECO:0000305" key="4"/>
<evidence type="ECO:0000312" key="5">
    <source>
        <dbReference type="Araport" id="AT3G60620"/>
    </source>
</evidence>
<evidence type="ECO:0000312" key="6">
    <source>
        <dbReference type="EMBL" id="CAB82666.1"/>
    </source>
</evidence>
<evidence type="ECO:0000312" key="7">
    <source>
        <dbReference type="Proteomes" id="UP000006548"/>
    </source>
</evidence>
<gene>
    <name evidence="3" type="primary">CDS5</name>
    <name evidence="5" type="ordered locus">At3g60620</name>
    <name evidence="6" type="ORF">T4C21_30</name>
</gene>
<comment type="function">
    <text evidence="2">May be involved in the synthesis of minor phospholipids and in modulation of IP3-mediated signal transduction. Promotes the biosynthesis of plastidial phosphatidylglycerol (PG) which is required for structure and function of thylakoid membranes and, hence, for photoautotrophic growth.</text>
</comment>
<comment type="catalytic activity">
    <reaction evidence="2">
        <text>a 1,2-diacyl-sn-glycero-3-phosphate + CTP + H(+) = a CDP-1,2-diacyl-sn-glycerol + diphosphate</text>
        <dbReference type="Rhea" id="RHEA:16229"/>
        <dbReference type="ChEBI" id="CHEBI:15378"/>
        <dbReference type="ChEBI" id="CHEBI:33019"/>
        <dbReference type="ChEBI" id="CHEBI:37563"/>
        <dbReference type="ChEBI" id="CHEBI:58332"/>
        <dbReference type="ChEBI" id="CHEBI:58608"/>
        <dbReference type="EC" id="2.7.7.41"/>
    </reaction>
</comment>
<comment type="cofactor">
    <cofactor evidence="2">
        <name>Mg(2+)</name>
        <dbReference type="ChEBI" id="CHEBI:18420"/>
    </cofactor>
    <text evidence="2">Requires a divalent cation for activity. Displays highest activities with MgCl(2).</text>
</comment>
<comment type="activity regulation">
    <text evidence="2">Highest activities is obtained at about 30 mM CTP and 2 mM phosphatidic acid (PA).</text>
</comment>
<comment type="biophysicochemical properties">
    <phDependence>
        <text evidence="2">Optimum pH is 7.5.</text>
    </phDependence>
</comment>
<comment type="pathway">
    <text evidence="2">Phospholipid metabolism; CDP-diacylglycerol biosynthesis; CDP-diacylglycerol from sn-glycerol 3-phosphate: step 3/3.</text>
</comment>
<comment type="subcellular location">
    <subcellularLocation>
        <location evidence="2">Plastid</location>
        <location evidence="2">Chloroplast membrane</location>
        <topology evidence="1">Multi-pass membrane protein</topology>
    </subcellularLocation>
</comment>
<comment type="disruption phenotype">
    <text evidence="2">When associated with the disruption of CDS5, requires sucrose (Suc) treatment to grow. Pale yellow-green leaves with reduced chlorophyll levels but an increased chlorophyll a/b ratio. Reduced plastidial phosphatidylglycerol (PG) biosynthesis leading to abnormal thylakoid membrane development.</text>
</comment>
<comment type="similarity">
    <text evidence="4">Belongs to the CDS family.</text>
</comment>
<sequence length="399" mass="43251">MAPFVEVCRYKPLPLSLSSLCTCPCRSSPRKYLILPQFSEKYPKPLLSHSRFTPISVNRRVITAVARAESNQIGDDANSKEEHNIDQELQNVEEDSSLDDQKQKSRSQFKKRVTFGLGIGLSVGGIVLAGGWVFTVAVAAAVLLSAREYFELVRSKGIAQGMTPPPRYLSRVCSIICALMPILTLYFGHIDISITSAAFVVAMALLLQRGNPRFSQLSSTMFGLFYCGYLPCFWVKLRCGLTAPVLNTGIGRSWPTILGGQAHWTVGLVAILISFCGIIASDTFAFLGGKAFGRTPLISISPKKTWEGAFAGLVGCISITILLSKSLSWPQSLVSTIAFGVLNFFGSVFGDLTESMIKRDAGVKDSGSLIPGHGGILDRVDSYIFTGALAYSFVRLHGV</sequence>
<keyword id="KW-0150">Chloroplast</keyword>
<keyword id="KW-0444">Lipid biosynthesis</keyword>
<keyword id="KW-0443">Lipid metabolism</keyword>
<keyword id="KW-0460">Magnesium</keyword>
<keyword id="KW-0472">Membrane</keyword>
<keyword id="KW-0548">Nucleotidyltransferase</keyword>
<keyword id="KW-0594">Phospholipid biosynthesis</keyword>
<keyword id="KW-1208">Phospholipid metabolism</keyword>
<keyword id="KW-0934">Plastid</keyword>
<keyword id="KW-1185">Reference proteome</keyword>
<keyword id="KW-0808">Transferase</keyword>
<keyword id="KW-0809">Transit peptide</keyword>
<keyword id="KW-0812">Transmembrane</keyword>
<keyword id="KW-1133">Transmembrane helix</keyword>
<proteinExistence type="evidence at protein level"/>
<feature type="transit peptide" description="Chloroplast" evidence="1">
    <location>
        <begin position="1"/>
        <end position="26"/>
    </location>
</feature>
<feature type="chain" id="PRO_0000431834" description="Phosphatidate cytidylyltransferase 5, chloroplastic">
    <location>
        <begin position="27"/>
        <end position="399"/>
    </location>
</feature>
<feature type="transmembrane region" description="Helical; Name=1" evidence="1">
    <location>
        <begin position="123"/>
        <end position="143"/>
    </location>
</feature>
<feature type="transmembrane region" description="Helical; Name=2" evidence="1">
    <location>
        <begin position="187"/>
        <end position="207"/>
    </location>
</feature>
<feature type="transmembrane region" description="Helical; Name=3" evidence="1">
    <location>
        <begin position="217"/>
        <end position="237"/>
    </location>
</feature>
<feature type="transmembrane region" description="Helical; Name=4" evidence="1">
    <location>
        <begin position="266"/>
        <end position="286"/>
    </location>
</feature>
<feature type="transmembrane region" description="Helical; Name=5" evidence="1">
    <location>
        <begin position="309"/>
        <end position="329"/>
    </location>
</feature>
<feature type="transmembrane region" description="Helical; Name=6" evidence="1">
    <location>
        <begin position="333"/>
        <end position="353"/>
    </location>
</feature>
<dbReference type="EC" id="2.7.7.41" evidence="2"/>
<dbReference type="EMBL" id="AL162295">
    <property type="protein sequence ID" value="CAB82666.1"/>
    <property type="molecule type" value="Genomic_DNA"/>
</dbReference>
<dbReference type="EMBL" id="CP002686">
    <property type="protein sequence ID" value="AEE80089.1"/>
    <property type="molecule type" value="Genomic_DNA"/>
</dbReference>
<dbReference type="EMBL" id="AY035018">
    <property type="protein sequence ID" value="AAK59523.1"/>
    <property type="molecule type" value="mRNA"/>
</dbReference>
<dbReference type="EMBL" id="AY059084">
    <property type="protein sequence ID" value="AAL15190.1"/>
    <property type="molecule type" value="mRNA"/>
</dbReference>
<dbReference type="PIR" id="T47873">
    <property type="entry name" value="T47873"/>
</dbReference>
<dbReference type="RefSeq" id="NP_191621.1">
    <property type="nucleotide sequence ID" value="NM_115926.4"/>
</dbReference>
<dbReference type="SMR" id="Q9M001"/>
<dbReference type="FunCoup" id="Q9M001">
    <property type="interactions" value="729"/>
</dbReference>
<dbReference type="IntAct" id="Q9M001">
    <property type="interactions" value="4"/>
</dbReference>
<dbReference type="STRING" id="3702.Q9M001"/>
<dbReference type="PaxDb" id="3702-AT3G60620.1"/>
<dbReference type="ProteomicsDB" id="222810"/>
<dbReference type="EnsemblPlants" id="AT3G60620.1">
    <property type="protein sequence ID" value="AT3G60620.1"/>
    <property type="gene ID" value="AT3G60620"/>
</dbReference>
<dbReference type="GeneID" id="825233"/>
<dbReference type="Gramene" id="AT3G60620.1">
    <property type="protein sequence ID" value="AT3G60620.1"/>
    <property type="gene ID" value="AT3G60620"/>
</dbReference>
<dbReference type="KEGG" id="ath:AT3G60620"/>
<dbReference type="Araport" id="AT3G60620"/>
<dbReference type="TAIR" id="AT3G60620">
    <property type="gene designation" value="CDS5"/>
</dbReference>
<dbReference type="eggNOG" id="KOG1440">
    <property type="taxonomic scope" value="Eukaryota"/>
</dbReference>
<dbReference type="HOGENOM" id="CLU_037294_4_1_1"/>
<dbReference type="InParanoid" id="Q9M001"/>
<dbReference type="OMA" id="CPCRSTP"/>
<dbReference type="PhylomeDB" id="Q9M001"/>
<dbReference type="BRENDA" id="2.7.7.41">
    <property type="organism ID" value="399"/>
</dbReference>
<dbReference type="UniPathway" id="UPA00557">
    <property type="reaction ID" value="UER00614"/>
</dbReference>
<dbReference type="PRO" id="PR:Q9M001"/>
<dbReference type="Proteomes" id="UP000006548">
    <property type="component" value="Chromosome 3"/>
</dbReference>
<dbReference type="ExpressionAtlas" id="Q9M001">
    <property type="expression patterns" value="baseline and differential"/>
</dbReference>
<dbReference type="GO" id="GO:0009507">
    <property type="term" value="C:chloroplast"/>
    <property type="evidence" value="ECO:0007005"/>
    <property type="project" value="TAIR"/>
</dbReference>
<dbReference type="GO" id="GO:0009941">
    <property type="term" value="C:chloroplast envelope"/>
    <property type="evidence" value="ECO:0007005"/>
    <property type="project" value="TAIR"/>
</dbReference>
<dbReference type="GO" id="GO:0031969">
    <property type="term" value="C:chloroplast membrane"/>
    <property type="evidence" value="ECO:0007669"/>
    <property type="project" value="UniProtKB-SubCell"/>
</dbReference>
<dbReference type="GO" id="GO:0009535">
    <property type="term" value="C:chloroplast thylakoid membrane"/>
    <property type="evidence" value="ECO:0000315"/>
    <property type="project" value="UniProtKB"/>
</dbReference>
<dbReference type="GO" id="GO:0009536">
    <property type="term" value="C:plastid"/>
    <property type="evidence" value="ECO:0000314"/>
    <property type="project" value="TAIR"/>
</dbReference>
<dbReference type="GO" id="GO:0004605">
    <property type="term" value="F:phosphatidate cytidylyltransferase activity"/>
    <property type="evidence" value="ECO:0000315"/>
    <property type="project" value="TAIR"/>
</dbReference>
<dbReference type="GO" id="GO:0016024">
    <property type="term" value="P:CDP-diacylglycerol biosynthetic process"/>
    <property type="evidence" value="ECO:0007669"/>
    <property type="project" value="UniProtKB-UniPathway"/>
</dbReference>
<dbReference type="GO" id="GO:0006655">
    <property type="term" value="P:phosphatidylglycerol biosynthetic process"/>
    <property type="evidence" value="ECO:0000315"/>
    <property type="project" value="UniProtKB"/>
</dbReference>
<dbReference type="InterPro" id="IPR000374">
    <property type="entry name" value="PC_trans"/>
</dbReference>
<dbReference type="PANTHER" id="PTHR47101">
    <property type="entry name" value="PHOSPHATIDATE CYTIDYLYLTRANSFERASE 5, CHLOROPLASTIC"/>
    <property type="match status" value="1"/>
</dbReference>
<dbReference type="PANTHER" id="PTHR47101:SF5">
    <property type="entry name" value="PHOSPHATIDATE CYTIDYLYLTRANSFERASE 5, CHLOROPLASTIC"/>
    <property type="match status" value="1"/>
</dbReference>
<dbReference type="Pfam" id="PF01148">
    <property type="entry name" value="CTP_transf_1"/>
    <property type="match status" value="1"/>
</dbReference>
<dbReference type="PROSITE" id="PS01315">
    <property type="entry name" value="CDS"/>
    <property type="match status" value="1"/>
</dbReference>
<organism evidence="7">
    <name type="scientific">Arabidopsis thaliana</name>
    <name type="common">Mouse-ear cress</name>
    <dbReference type="NCBI Taxonomy" id="3702"/>
    <lineage>
        <taxon>Eukaryota</taxon>
        <taxon>Viridiplantae</taxon>
        <taxon>Streptophyta</taxon>
        <taxon>Embryophyta</taxon>
        <taxon>Tracheophyta</taxon>
        <taxon>Spermatophyta</taxon>
        <taxon>Magnoliopsida</taxon>
        <taxon>eudicotyledons</taxon>
        <taxon>Gunneridae</taxon>
        <taxon>Pentapetalae</taxon>
        <taxon>rosids</taxon>
        <taxon>malvids</taxon>
        <taxon>Brassicales</taxon>
        <taxon>Brassicaceae</taxon>
        <taxon>Camelineae</taxon>
        <taxon>Arabidopsis</taxon>
    </lineage>
</organism>
<name>CDS5_ARATH</name>
<accession>Q9M001</accession>
<protein>
    <recommendedName>
        <fullName evidence="3">Phosphatidate cytidylyltransferase 5, chloroplastic</fullName>
        <ecNumber evidence="2">2.7.7.41</ecNumber>
    </recommendedName>
    <alternativeName>
        <fullName>CDP-DAG synthase 5</fullName>
    </alternativeName>
    <alternativeName>
        <fullName>CDP-DG synthase 5</fullName>
    </alternativeName>
    <alternativeName>
        <fullName>CDP-diacylglycerol synthase 5</fullName>
        <shortName>CDS 5</shortName>
    </alternativeName>
    <alternativeName>
        <fullName>CDP-diglyceride pyrophosphorylase 5</fullName>
    </alternativeName>
    <alternativeName>
        <fullName>CDP-diglyceride synthase 5</fullName>
    </alternativeName>
    <alternativeName>
        <fullName>CTP:phosphatidate cytidylyltransferase 5</fullName>
    </alternativeName>
</protein>
<reference key="1">
    <citation type="journal article" date="2000" name="Nature">
        <title>Sequence and analysis of chromosome 3 of the plant Arabidopsis thaliana.</title>
        <authorList>
            <person name="Salanoubat M."/>
            <person name="Lemcke K."/>
            <person name="Rieger M."/>
            <person name="Ansorge W."/>
            <person name="Unseld M."/>
            <person name="Fartmann B."/>
            <person name="Valle G."/>
            <person name="Bloecker H."/>
            <person name="Perez-Alonso M."/>
            <person name="Obermaier B."/>
            <person name="Delseny M."/>
            <person name="Boutry M."/>
            <person name="Grivell L.A."/>
            <person name="Mache R."/>
            <person name="Puigdomenech P."/>
            <person name="De Simone V."/>
            <person name="Choisne N."/>
            <person name="Artiguenave F."/>
            <person name="Robert C."/>
            <person name="Brottier P."/>
            <person name="Wincker P."/>
            <person name="Cattolico L."/>
            <person name="Weissenbach J."/>
            <person name="Saurin W."/>
            <person name="Quetier F."/>
            <person name="Schaefer M."/>
            <person name="Mueller-Auer S."/>
            <person name="Gabel C."/>
            <person name="Fuchs M."/>
            <person name="Benes V."/>
            <person name="Wurmbach E."/>
            <person name="Drzonek H."/>
            <person name="Erfle H."/>
            <person name="Jordan N."/>
            <person name="Bangert S."/>
            <person name="Wiedelmann R."/>
            <person name="Kranz H."/>
            <person name="Voss H."/>
            <person name="Holland R."/>
            <person name="Brandt P."/>
            <person name="Nyakatura G."/>
            <person name="Vezzi A."/>
            <person name="D'Angelo M."/>
            <person name="Pallavicini A."/>
            <person name="Toppo S."/>
            <person name="Simionati B."/>
            <person name="Conrad A."/>
            <person name="Hornischer K."/>
            <person name="Kauer G."/>
            <person name="Loehnert T.-H."/>
            <person name="Nordsiek G."/>
            <person name="Reichelt J."/>
            <person name="Scharfe M."/>
            <person name="Schoen O."/>
            <person name="Bargues M."/>
            <person name="Terol J."/>
            <person name="Climent J."/>
            <person name="Navarro P."/>
            <person name="Collado C."/>
            <person name="Perez-Perez A."/>
            <person name="Ottenwaelder B."/>
            <person name="Duchemin D."/>
            <person name="Cooke R."/>
            <person name="Laudie M."/>
            <person name="Berger-Llauro C."/>
            <person name="Purnelle B."/>
            <person name="Masuy D."/>
            <person name="de Haan M."/>
            <person name="Maarse A.C."/>
            <person name="Alcaraz J.-P."/>
            <person name="Cottet A."/>
            <person name="Casacuberta E."/>
            <person name="Monfort A."/>
            <person name="Argiriou A."/>
            <person name="Flores M."/>
            <person name="Liguori R."/>
            <person name="Vitale D."/>
            <person name="Mannhaupt G."/>
            <person name="Haase D."/>
            <person name="Schoof H."/>
            <person name="Rudd S."/>
            <person name="Zaccaria P."/>
            <person name="Mewes H.-W."/>
            <person name="Mayer K.F.X."/>
            <person name="Kaul S."/>
            <person name="Town C.D."/>
            <person name="Koo H.L."/>
            <person name="Tallon L.J."/>
            <person name="Jenkins J."/>
            <person name="Rooney T."/>
            <person name="Rizzo M."/>
            <person name="Walts A."/>
            <person name="Utterback T."/>
            <person name="Fujii C.Y."/>
            <person name="Shea T.P."/>
            <person name="Creasy T.H."/>
            <person name="Haas B."/>
            <person name="Maiti R."/>
            <person name="Wu D."/>
            <person name="Peterson J."/>
            <person name="Van Aken S."/>
            <person name="Pai G."/>
            <person name="Militscher J."/>
            <person name="Sellers P."/>
            <person name="Gill J.E."/>
            <person name="Feldblyum T.V."/>
            <person name="Preuss D."/>
            <person name="Lin X."/>
            <person name="Nierman W.C."/>
            <person name="Salzberg S.L."/>
            <person name="White O."/>
            <person name="Venter J.C."/>
            <person name="Fraser C.M."/>
            <person name="Kaneko T."/>
            <person name="Nakamura Y."/>
            <person name="Sato S."/>
            <person name="Kato T."/>
            <person name="Asamizu E."/>
            <person name="Sasamoto S."/>
            <person name="Kimura T."/>
            <person name="Idesawa K."/>
            <person name="Kawashima K."/>
            <person name="Kishida Y."/>
            <person name="Kiyokawa C."/>
            <person name="Kohara M."/>
            <person name="Matsumoto M."/>
            <person name="Matsuno A."/>
            <person name="Muraki A."/>
            <person name="Nakayama S."/>
            <person name="Nakazaki N."/>
            <person name="Shinpo S."/>
            <person name="Takeuchi C."/>
            <person name="Wada T."/>
            <person name="Watanabe A."/>
            <person name="Yamada M."/>
            <person name="Yasuda M."/>
            <person name="Tabata S."/>
        </authorList>
    </citation>
    <scope>NUCLEOTIDE SEQUENCE [LARGE SCALE GENOMIC DNA]</scope>
    <source>
        <strain>cv. Columbia</strain>
    </source>
</reference>
<reference key="2">
    <citation type="journal article" date="2017" name="Plant J.">
        <title>Araport11: a complete reannotation of the Arabidopsis thaliana reference genome.</title>
        <authorList>
            <person name="Cheng C.Y."/>
            <person name="Krishnakumar V."/>
            <person name="Chan A.P."/>
            <person name="Thibaud-Nissen F."/>
            <person name="Schobel S."/>
            <person name="Town C.D."/>
        </authorList>
    </citation>
    <scope>GENOME REANNOTATION</scope>
    <source>
        <strain>cv. Columbia</strain>
    </source>
</reference>
<reference key="3">
    <citation type="journal article" date="2003" name="Science">
        <title>Empirical analysis of transcriptional activity in the Arabidopsis genome.</title>
        <authorList>
            <person name="Yamada K."/>
            <person name="Lim J."/>
            <person name="Dale J.M."/>
            <person name="Chen H."/>
            <person name="Shinn P."/>
            <person name="Palm C.J."/>
            <person name="Southwick A.M."/>
            <person name="Wu H.C."/>
            <person name="Kim C.J."/>
            <person name="Nguyen M."/>
            <person name="Pham P.K."/>
            <person name="Cheuk R.F."/>
            <person name="Karlin-Newmann G."/>
            <person name="Liu S.X."/>
            <person name="Lam B."/>
            <person name="Sakano H."/>
            <person name="Wu T."/>
            <person name="Yu G."/>
            <person name="Miranda M."/>
            <person name="Quach H.L."/>
            <person name="Tripp M."/>
            <person name="Chang C.H."/>
            <person name="Lee J.M."/>
            <person name="Toriumi M.J."/>
            <person name="Chan M.M."/>
            <person name="Tang C.C."/>
            <person name="Onodera C.S."/>
            <person name="Deng J.M."/>
            <person name="Akiyama K."/>
            <person name="Ansari Y."/>
            <person name="Arakawa T."/>
            <person name="Banh J."/>
            <person name="Banno F."/>
            <person name="Bowser L."/>
            <person name="Brooks S.Y."/>
            <person name="Carninci P."/>
            <person name="Chao Q."/>
            <person name="Choy N."/>
            <person name="Enju A."/>
            <person name="Goldsmith A.D."/>
            <person name="Gurjal M."/>
            <person name="Hansen N.F."/>
            <person name="Hayashizaki Y."/>
            <person name="Johnson-Hopson C."/>
            <person name="Hsuan V.W."/>
            <person name="Iida K."/>
            <person name="Karnes M."/>
            <person name="Khan S."/>
            <person name="Koesema E."/>
            <person name="Ishida J."/>
            <person name="Jiang P.X."/>
            <person name="Jones T."/>
            <person name="Kawai J."/>
            <person name="Kamiya A."/>
            <person name="Meyers C."/>
            <person name="Nakajima M."/>
            <person name="Narusaka M."/>
            <person name="Seki M."/>
            <person name="Sakurai T."/>
            <person name="Satou M."/>
            <person name="Tamse R."/>
            <person name="Vaysberg M."/>
            <person name="Wallender E.K."/>
            <person name="Wong C."/>
            <person name="Yamamura Y."/>
            <person name="Yuan S."/>
            <person name="Shinozaki K."/>
            <person name="Davis R.W."/>
            <person name="Theologis A."/>
            <person name="Ecker J.R."/>
        </authorList>
    </citation>
    <scope>NUCLEOTIDE SEQUENCE [LARGE SCALE MRNA]</scope>
    <source>
        <strain>cv. Columbia</strain>
    </source>
</reference>
<reference key="4">
    <citation type="journal article" date="2010" name="Plant Physiol.">
        <title>Two closely related genes of Arabidopsis encode plastidial cytidinediphosphate diacylglycerol synthases essential for photoautotrophic growth.</title>
        <authorList>
            <person name="Haselier A."/>
            <person name="Akbari H."/>
            <person name="Weth A."/>
            <person name="Baumgartner W."/>
            <person name="Frentzen M."/>
        </authorList>
    </citation>
    <scope>FUNCTION</scope>
    <scope>DISRUPTION PHENOTYPE</scope>
    <scope>ACTIVITY REGULATION</scope>
    <scope>BIOPHYSICOCHEMICAL PROPERTIES</scope>
    <scope>COFACTOR</scope>
    <scope>CATALYTIC ACTIVITY</scope>
    <scope>PATHWAY</scope>
    <scope>SUBCELLULAR LOCATION</scope>
    <scope>GENE FAMILY</scope>
    <scope>NOMENCLATURE</scope>
</reference>